<name>METE_BURCJ</name>
<feature type="chain" id="PRO_1000097819" description="5-methyltetrahydropteroyltriglutamate--homocysteine methyltransferase">
    <location>
        <begin position="1"/>
        <end position="764"/>
    </location>
</feature>
<feature type="active site" description="Proton donor" evidence="1">
    <location>
        <position position="703"/>
    </location>
</feature>
<feature type="binding site" evidence="1">
    <location>
        <begin position="16"/>
        <end position="19"/>
    </location>
    <ligand>
        <name>5-methyltetrahydropteroyltri-L-glutamate</name>
        <dbReference type="ChEBI" id="CHEBI:58207"/>
    </ligand>
</feature>
<feature type="binding site" evidence="1">
    <location>
        <position position="121"/>
    </location>
    <ligand>
        <name>5-methyltetrahydropteroyltri-L-glutamate</name>
        <dbReference type="ChEBI" id="CHEBI:58207"/>
    </ligand>
</feature>
<feature type="binding site" evidence="1">
    <location>
        <begin position="440"/>
        <end position="442"/>
    </location>
    <ligand>
        <name>L-homocysteine</name>
        <dbReference type="ChEBI" id="CHEBI:58199"/>
    </ligand>
</feature>
<feature type="binding site" evidence="1">
    <location>
        <begin position="440"/>
        <end position="442"/>
    </location>
    <ligand>
        <name>L-methionine</name>
        <dbReference type="ChEBI" id="CHEBI:57844"/>
    </ligand>
</feature>
<feature type="binding site" evidence="1">
    <location>
        <position position="493"/>
    </location>
    <ligand>
        <name>L-homocysteine</name>
        <dbReference type="ChEBI" id="CHEBI:58199"/>
    </ligand>
</feature>
<feature type="binding site" evidence="1">
    <location>
        <position position="493"/>
    </location>
    <ligand>
        <name>L-methionine</name>
        <dbReference type="ChEBI" id="CHEBI:57844"/>
    </ligand>
</feature>
<feature type="binding site" evidence="1">
    <location>
        <begin position="524"/>
        <end position="525"/>
    </location>
    <ligand>
        <name>5-methyltetrahydropteroyltri-L-glutamate</name>
        <dbReference type="ChEBI" id="CHEBI:58207"/>
    </ligand>
</feature>
<feature type="binding site" evidence="1">
    <location>
        <position position="570"/>
    </location>
    <ligand>
        <name>5-methyltetrahydropteroyltri-L-glutamate</name>
        <dbReference type="ChEBI" id="CHEBI:58207"/>
    </ligand>
</feature>
<feature type="binding site" evidence="1">
    <location>
        <position position="608"/>
    </location>
    <ligand>
        <name>L-homocysteine</name>
        <dbReference type="ChEBI" id="CHEBI:58199"/>
    </ligand>
</feature>
<feature type="binding site" evidence="1">
    <location>
        <position position="608"/>
    </location>
    <ligand>
        <name>L-methionine</name>
        <dbReference type="ChEBI" id="CHEBI:57844"/>
    </ligand>
</feature>
<feature type="binding site" evidence="1">
    <location>
        <position position="614"/>
    </location>
    <ligand>
        <name>5-methyltetrahydropteroyltri-L-glutamate</name>
        <dbReference type="ChEBI" id="CHEBI:58207"/>
    </ligand>
</feature>
<feature type="binding site" evidence="1">
    <location>
        <position position="650"/>
    </location>
    <ligand>
        <name>Zn(2+)</name>
        <dbReference type="ChEBI" id="CHEBI:29105"/>
        <note>catalytic</note>
    </ligand>
</feature>
<feature type="binding site" evidence="1">
    <location>
        <position position="652"/>
    </location>
    <ligand>
        <name>Zn(2+)</name>
        <dbReference type="ChEBI" id="CHEBI:29105"/>
        <note>catalytic</note>
    </ligand>
</feature>
<feature type="binding site" evidence="1">
    <location>
        <position position="674"/>
    </location>
    <ligand>
        <name>Zn(2+)</name>
        <dbReference type="ChEBI" id="CHEBI:29105"/>
        <note>catalytic</note>
    </ligand>
</feature>
<feature type="binding site" evidence="1">
    <location>
        <position position="735"/>
    </location>
    <ligand>
        <name>Zn(2+)</name>
        <dbReference type="ChEBI" id="CHEBI:29105"/>
        <note>catalytic</note>
    </ligand>
</feature>
<proteinExistence type="inferred from homology"/>
<evidence type="ECO:0000255" key="1">
    <source>
        <dbReference type="HAMAP-Rule" id="MF_00172"/>
    </source>
</evidence>
<protein>
    <recommendedName>
        <fullName evidence="1">5-methyltetrahydropteroyltriglutamate--homocysteine methyltransferase</fullName>
        <ecNumber evidence="1">2.1.1.14</ecNumber>
    </recommendedName>
    <alternativeName>
        <fullName evidence="1">Cobalamin-independent methionine synthase</fullName>
    </alternativeName>
    <alternativeName>
        <fullName evidence="1">Methionine synthase, vitamin-B12 independent isozyme</fullName>
    </alternativeName>
</protein>
<keyword id="KW-0028">Amino-acid biosynthesis</keyword>
<keyword id="KW-0479">Metal-binding</keyword>
<keyword id="KW-0486">Methionine biosynthesis</keyword>
<keyword id="KW-0489">Methyltransferase</keyword>
<keyword id="KW-0677">Repeat</keyword>
<keyword id="KW-0808">Transferase</keyword>
<keyword id="KW-0862">Zinc</keyword>
<organism>
    <name type="scientific">Burkholderia cenocepacia (strain ATCC BAA-245 / DSM 16553 / LMG 16656 / NCTC 13227 / J2315 / CF5610)</name>
    <name type="common">Burkholderia cepacia (strain J2315)</name>
    <dbReference type="NCBI Taxonomy" id="216591"/>
    <lineage>
        <taxon>Bacteria</taxon>
        <taxon>Pseudomonadati</taxon>
        <taxon>Pseudomonadota</taxon>
        <taxon>Betaproteobacteria</taxon>
        <taxon>Burkholderiales</taxon>
        <taxon>Burkholderiaceae</taxon>
        <taxon>Burkholderia</taxon>
        <taxon>Burkholderia cepacia complex</taxon>
    </lineage>
</organism>
<comment type="function">
    <text evidence="1">Catalyzes the transfer of a methyl group from 5-methyltetrahydrofolate to homocysteine resulting in methionine formation.</text>
</comment>
<comment type="catalytic activity">
    <reaction evidence="1">
        <text>5-methyltetrahydropteroyltri-L-glutamate + L-homocysteine = tetrahydropteroyltri-L-glutamate + L-methionine</text>
        <dbReference type="Rhea" id="RHEA:21196"/>
        <dbReference type="ChEBI" id="CHEBI:57844"/>
        <dbReference type="ChEBI" id="CHEBI:58140"/>
        <dbReference type="ChEBI" id="CHEBI:58199"/>
        <dbReference type="ChEBI" id="CHEBI:58207"/>
        <dbReference type="EC" id="2.1.1.14"/>
    </reaction>
</comment>
<comment type="cofactor">
    <cofactor evidence="1">
        <name>Zn(2+)</name>
        <dbReference type="ChEBI" id="CHEBI:29105"/>
    </cofactor>
    <text evidence="1">Binds 1 zinc ion per subunit.</text>
</comment>
<comment type="pathway">
    <text evidence="1">Amino-acid biosynthesis; L-methionine biosynthesis via de novo pathway; L-methionine from L-homocysteine (MetE route): step 1/1.</text>
</comment>
<comment type="similarity">
    <text evidence="1">Belongs to the vitamin-B12 independent methionine synthase family.</text>
</comment>
<reference key="1">
    <citation type="journal article" date="2009" name="J. Bacteriol.">
        <title>The genome of Burkholderia cenocepacia J2315, an epidemic pathogen of cystic fibrosis patients.</title>
        <authorList>
            <person name="Holden M.T."/>
            <person name="Seth-Smith H.M."/>
            <person name="Crossman L.C."/>
            <person name="Sebaihia M."/>
            <person name="Bentley S.D."/>
            <person name="Cerdeno-Tarraga A.M."/>
            <person name="Thomson N.R."/>
            <person name="Bason N."/>
            <person name="Quail M.A."/>
            <person name="Sharp S."/>
            <person name="Cherevach I."/>
            <person name="Churcher C."/>
            <person name="Goodhead I."/>
            <person name="Hauser H."/>
            <person name="Holroyd N."/>
            <person name="Mungall K."/>
            <person name="Scott P."/>
            <person name="Walker D."/>
            <person name="White B."/>
            <person name="Rose H."/>
            <person name="Iversen P."/>
            <person name="Mil-Homens D."/>
            <person name="Rocha E.P."/>
            <person name="Fialho A.M."/>
            <person name="Baldwin A."/>
            <person name="Dowson C."/>
            <person name="Barrell B.G."/>
            <person name="Govan J.R."/>
            <person name="Vandamme P."/>
            <person name="Hart C.A."/>
            <person name="Mahenthiralingam E."/>
            <person name="Parkhill J."/>
        </authorList>
    </citation>
    <scope>NUCLEOTIDE SEQUENCE [LARGE SCALE GENOMIC DNA]</scope>
    <source>
        <strain>ATCC BAA-245 / DSM 16553 / LMG 16656 / NCTC 13227 / J2315 / CF5610</strain>
    </source>
</reference>
<sequence>MVTTHNLGFPRIGAKRELKFGLERYWKGESSRDELKALGAELRRRHWHDQRDLDLAPIGDFAFYDQVLDMSFTLGNLPKRVQDFHGDALDNAFRVARGRSAQSAEAHAACCGGVAAGEMTKWFDTNYHYIVPEFHADTNFSLDPSRLLQQLAEANAQGVNAKPVILGPVTYLWLGKAKDDSDRLALLPKLLPVYGALLDTLTAQGVEWVQIDEPILVTELDAEWRQAFRTAYAALETRRINLLLATYFGQLQDNLTLAASLPVDGLHIDAINARDEVDALVRELPPERVLSIGAINGRNIWKTDLNATLDWLEPLAKQLGDRLWLAPSCSLLHVPVDLANEAKLDAEIRSWLAFALQKLDELKVLATALNEGRDTVADALAANAAAIESRRRSPRVNNPAVKAAIARIDARLGNRASPYAQRASKQSARLNLPAFPTTTIGSFPQTAEIRQARSRFKAGTLDEAGYRTAMQAEIERSVREQESLELDVLVHGEAERNDMVEYFGEQLDGYAFSQFGWVQSYGSRCVKPPILFGDISRPKAMTVEWITYAQSLTNKPMKGMLTGPVTILNWSFVRDDQPRSVSCYQLALAIRDEVLDLEQAGVRVIQIDEAALREGLPLRRAQWSEYLKWAVESFRITANGVQDDTQIHTHMCYSEFNDIIASIADMDADVITIETSRSDMELLDAFDDFKYPNEIGPGVYDIHSPNIPTQDHIVGLMRKAAERIPAERLWVNPDCGLKTRQWGEVIPALTNMVAAAKTLRNQVR</sequence>
<accession>B4EJ37</accession>
<dbReference type="EC" id="2.1.1.14" evidence="1"/>
<dbReference type="EMBL" id="AM747721">
    <property type="protein sequence ID" value="CAR56349.1"/>
    <property type="molecule type" value="Genomic_DNA"/>
</dbReference>
<dbReference type="RefSeq" id="WP_006488503.1">
    <property type="nucleotide sequence ID" value="NC_011001.1"/>
</dbReference>
<dbReference type="SMR" id="B4EJ37"/>
<dbReference type="KEGG" id="bcj:BCAM2484"/>
<dbReference type="eggNOG" id="COG0620">
    <property type="taxonomic scope" value="Bacteria"/>
</dbReference>
<dbReference type="HOGENOM" id="CLU_013175_0_0_4"/>
<dbReference type="BioCyc" id="BCEN216591:G1G1V-6588-MONOMER"/>
<dbReference type="UniPathway" id="UPA00051">
    <property type="reaction ID" value="UER00082"/>
</dbReference>
<dbReference type="Proteomes" id="UP000001035">
    <property type="component" value="Chromosome 2"/>
</dbReference>
<dbReference type="GO" id="GO:0003871">
    <property type="term" value="F:5-methyltetrahydropteroyltriglutamate-homocysteine S-methyltransferase activity"/>
    <property type="evidence" value="ECO:0007669"/>
    <property type="project" value="UniProtKB-UniRule"/>
</dbReference>
<dbReference type="GO" id="GO:0008270">
    <property type="term" value="F:zinc ion binding"/>
    <property type="evidence" value="ECO:0007669"/>
    <property type="project" value="InterPro"/>
</dbReference>
<dbReference type="GO" id="GO:0009086">
    <property type="term" value="P:methionine biosynthetic process"/>
    <property type="evidence" value="ECO:0007669"/>
    <property type="project" value="UniProtKB-UniRule"/>
</dbReference>
<dbReference type="GO" id="GO:0032259">
    <property type="term" value="P:methylation"/>
    <property type="evidence" value="ECO:0007669"/>
    <property type="project" value="UniProtKB-KW"/>
</dbReference>
<dbReference type="CDD" id="cd03311">
    <property type="entry name" value="CIMS_C_terminal_like"/>
    <property type="match status" value="1"/>
</dbReference>
<dbReference type="CDD" id="cd03312">
    <property type="entry name" value="CIMS_N_terminal_like"/>
    <property type="match status" value="1"/>
</dbReference>
<dbReference type="FunFam" id="3.20.20.210:FF:000002">
    <property type="entry name" value="5-methyltetrahydropteroyltriglutamate--homocysteine methyltransferase"/>
    <property type="match status" value="1"/>
</dbReference>
<dbReference type="FunFam" id="3.20.20.210:FF:000003">
    <property type="entry name" value="5-methyltetrahydropteroyltriglutamate--homocysteine methyltransferase"/>
    <property type="match status" value="1"/>
</dbReference>
<dbReference type="Gene3D" id="3.20.20.210">
    <property type="match status" value="2"/>
</dbReference>
<dbReference type="HAMAP" id="MF_00172">
    <property type="entry name" value="Meth_synth"/>
    <property type="match status" value="1"/>
</dbReference>
<dbReference type="InterPro" id="IPR013215">
    <property type="entry name" value="Cbl-indep_Met_Synth_N"/>
</dbReference>
<dbReference type="InterPro" id="IPR006276">
    <property type="entry name" value="Cobalamin-indep_Met_synthase"/>
</dbReference>
<dbReference type="InterPro" id="IPR002629">
    <property type="entry name" value="Met_Synth_C/arc"/>
</dbReference>
<dbReference type="InterPro" id="IPR038071">
    <property type="entry name" value="UROD/MetE-like_sf"/>
</dbReference>
<dbReference type="NCBIfam" id="TIGR01371">
    <property type="entry name" value="met_syn_B12ind"/>
    <property type="match status" value="1"/>
</dbReference>
<dbReference type="NCBIfam" id="NF003556">
    <property type="entry name" value="PRK05222.1"/>
    <property type="match status" value="1"/>
</dbReference>
<dbReference type="PANTHER" id="PTHR30519">
    <property type="entry name" value="5-METHYLTETRAHYDROPTEROYLTRIGLUTAMATE--HOMOCYSTEINE METHYLTRANSFERASE"/>
    <property type="match status" value="1"/>
</dbReference>
<dbReference type="Pfam" id="PF08267">
    <property type="entry name" value="Meth_synt_1"/>
    <property type="match status" value="1"/>
</dbReference>
<dbReference type="Pfam" id="PF01717">
    <property type="entry name" value="Meth_synt_2"/>
    <property type="match status" value="1"/>
</dbReference>
<dbReference type="PIRSF" id="PIRSF000382">
    <property type="entry name" value="MeTrfase_B12_ind"/>
    <property type="match status" value="1"/>
</dbReference>
<dbReference type="SUPFAM" id="SSF51726">
    <property type="entry name" value="UROD/MetE-like"/>
    <property type="match status" value="2"/>
</dbReference>
<gene>
    <name evidence="1" type="primary">metE</name>
    <name type="ordered locus">BceJ2315_59240</name>
    <name type="ORF">BCAM2484</name>
</gene>